<comment type="function">
    <text evidence="1">Catalyzes the 2-thiolation of uridine at the wobble position (U34) of tRNA, leading to the formation of s(2)U34.</text>
</comment>
<comment type="catalytic activity">
    <reaction evidence="1">
        <text>S-sulfanyl-L-cysteinyl-[protein] + uridine(34) in tRNA + AH2 + ATP = 2-thiouridine(34) in tRNA + L-cysteinyl-[protein] + A + AMP + diphosphate + H(+)</text>
        <dbReference type="Rhea" id="RHEA:47032"/>
        <dbReference type="Rhea" id="RHEA-COMP:10131"/>
        <dbReference type="Rhea" id="RHEA-COMP:11726"/>
        <dbReference type="Rhea" id="RHEA-COMP:11727"/>
        <dbReference type="Rhea" id="RHEA-COMP:11728"/>
        <dbReference type="ChEBI" id="CHEBI:13193"/>
        <dbReference type="ChEBI" id="CHEBI:15378"/>
        <dbReference type="ChEBI" id="CHEBI:17499"/>
        <dbReference type="ChEBI" id="CHEBI:29950"/>
        <dbReference type="ChEBI" id="CHEBI:30616"/>
        <dbReference type="ChEBI" id="CHEBI:33019"/>
        <dbReference type="ChEBI" id="CHEBI:61963"/>
        <dbReference type="ChEBI" id="CHEBI:65315"/>
        <dbReference type="ChEBI" id="CHEBI:87170"/>
        <dbReference type="ChEBI" id="CHEBI:456215"/>
        <dbReference type="EC" id="2.8.1.13"/>
    </reaction>
</comment>
<comment type="subcellular location">
    <subcellularLocation>
        <location evidence="1">Cytoplasm</location>
    </subcellularLocation>
</comment>
<comment type="similarity">
    <text evidence="1">Belongs to the MnmA/TRMU family.</text>
</comment>
<dbReference type="EC" id="2.8.1.13" evidence="1"/>
<dbReference type="EMBL" id="CP000853">
    <property type="protein sequence ID" value="ABW18438.1"/>
    <property type="molecule type" value="Genomic_DNA"/>
</dbReference>
<dbReference type="RefSeq" id="WP_012158750.1">
    <property type="nucleotide sequence ID" value="NC_009922.1"/>
</dbReference>
<dbReference type="SMR" id="A8MEV9"/>
<dbReference type="STRING" id="350688.Clos_0891"/>
<dbReference type="KEGG" id="aoe:Clos_0891"/>
<dbReference type="eggNOG" id="COG0482">
    <property type="taxonomic scope" value="Bacteria"/>
</dbReference>
<dbReference type="HOGENOM" id="CLU_035188_1_0_9"/>
<dbReference type="OrthoDB" id="9800696at2"/>
<dbReference type="Proteomes" id="UP000000269">
    <property type="component" value="Chromosome"/>
</dbReference>
<dbReference type="GO" id="GO:0005737">
    <property type="term" value="C:cytoplasm"/>
    <property type="evidence" value="ECO:0007669"/>
    <property type="project" value="UniProtKB-SubCell"/>
</dbReference>
<dbReference type="GO" id="GO:0005524">
    <property type="term" value="F:ATP binding"/>
    <property type="evidence" value="ECO:0007669"/>
    <property type="project" value="UniProtKB-KW"/>
</dbReference>
<dbReference type="GO" id="GO:0000049">
    <property type="term" value="F:tRNA binding"/>
    <property type="evidence" value="ECO:0007669"/>
    <property type="project" value="UniProtKB-KW"/>
</dbReference>
<dbReference type="GO" id="GO:0103016">
    <property type="term" value="F:tRNA-uridine 2-sulfurtransferase activity"/>
    <property type="evidence" value="ECO:0007669"/>
    <property type="project" value="UniProtKB-EC"/>
</dbReference>
<dbReference type="GO" id="GO:0002143">
    <property type="term" value="P:tRNA wobble position uridine thiolation"/>
    <property type="evidence" value="ECO:0007669"/>
    <property type="project" value="TreeGrafter"/>
</dbReference>
<dbReference type="CDD" id="cd01998">
    <property type="entry name" value="MnmA_TRMU-like"/>
    <property type="match status" value="1"/>
</dbReference>
<dbReference type="FunFam" id="2.30.30.280:FF:000001">
    <property type="entry name" value="tRNA-specific 2-thiouridylase MnmA"/>
    <property type="match status" value="1"/>
</dbReference>
<dbReference type="FunFam" id="2.40.30.10:FF:000023">
    <property type="entry name" value="tRNA-specific 2-thiouridylase MnmA"/>
    <property type="match status" value="1"/>
</dbReference>
<dbReference type="FunFam" id="3.40.50.620:FF:000004">
    <property type="entry name" value="tRNA-specific 2-thiouridylase MnmA"/>
    <property type="match status" value="1"/>
</dbReference>
<dbReference type="Gene3D" id="2.30.30.280">
    <property type="entry name" value="Adenine nucleotide alpha hydrolases-like domains"/>
    <property type="match status" value="1"/>
</dbReference>
<dbReference type="Gene3D" id="3.40.50.620">
    <property type="entry name" value="HUPs"/>
    <property type="match status" value="1"/>
</dbReference>
<dbReference type="Gene3D" id="2.40.30.10">
    <property type="entry name" value="Translation factors"/>
    <property type="match status" value="1"/>
</dbReference>
<dbReference type="HAMAP" id="MF_00144">
    <property type="entry name" value="tRNA_thiouridyl_MnmA"/>
    <property type="match status" value="1"/>
</dbReference>
<dbReference type="InterPro" id="IPR004506">
    <property type="entry name" value="MnmA-like"/>
</dbReference>
<dbReference type="InterPro" id="IPR046885">
    <property type="entry name" value="MnmA-like_C"/>
</dbReference>
<dbReference type="InterPro" id="IPR046884">
    <property type="entry name" value="MnmA-like_central"/>
</dbReference>
<dbReference type="InterPro" id="IPR023382">
    <property type="entry name" value="MnmA-like_central_sf"/>
</dbReference>
<dbReference type="InterPro" id="IPR014729">
    <property type="entry name" value="Rossmann-like_a/b/a_fold"/>
</dbReference>
<dbReference type="NCBIfam" id="NF001138">
    <property type="entry name" value="PRK00143.1"/>
    <property type="match status" value="1"/>
</dbReference>
<dbReference type="NCBIfam" id="TIGR00420">
    <property type="entry name" value="trmU"/>
    <property type="match status" value="1"/>
</dbReference>
<dbReference type="PANTHER" id="PTHR11933:SF5">
    <property type="entry name" value="MITOCHONDRIAL TRNA-SPECIFIC 2-THIOURIDYLASE 1"/>
    <property type="match status" value="1"/>
</dbReference>
<dbReference type="PANTHER" id="PTHR11933">
    <property type="entry name" value="TRNA 5-METHYLAMINOMETHYL-2-THIOURIDYLATE -METHYLTRANSFERASE"/>
    <property type="match status" value="1"/>
</dbReference>
<dbReference type="Pfam" id="PF03054">
    <property type="entry name" value="tRNA_Me_trans"/>
    <property type="match status" value="1"/>
</dbReference>
<dbReference type="Pfam" id="PF20258">
    <property type="entry name" value="tRNA_Me_trans_C"/>
    <property type="match status" value="1"/>
</dbReference>
<dbReference type="Pfam" id="PF20259">
    <property type="entry name" value="tRNA_Me_trans_M"/>
    <property type="match status" value="1"/>
</dbReference>
<dbReference type="SUPFAM" id="SSF52402">
    <property type="entry name" value="Adenine nucleotide alpha hydrolases-like"/>
    <property type="match status" value="1"/>
</dbReference>
<gene>
    <name evidence="1" type="primary">mnmA</name>
    <name type="ordered locus">Clos_0891</name>
</gene>
<proteinExistence type="inferred from homology"/>
<organism>
    <name type="scientific">Alkaliphilus oremlandii (strain OhILAs)</name>
    <name type="common">Clostridium oremlandii (strain OhILAs)</name>
    <dbReference type="NCBI Taxonomy" id="350688"/>
    <lineage>
        <taxon>Bacteria</taxon>
        <taxon>Bacillati</taxon>
        <taxon>Bacillota</taxon>
        <taxon>Clostridia</taxon>
        <taxon>Peptostreptococcales</taxon>
        <taxon>Natronincolaceae</taxon>
        <taxon>Alkaliphilus</taxon>
    </lineage>
</organism>
<reference key="1">
    <citation type="submission" date="2007-10" db="EMBL/GenBank/DDBJ databases">
        <title>Complete genome of Alkaliphilus oremlandii OhILAs.</title>
        <authorList>
            <person name="Copeland A."/>
            <person name="Lucas S."/>
            <person name="Lapidus A."/>
            <person name="Barry K."/>
            <person name="Detter J.C."/>
            <person name="Glavina del Rio T."/>
            <person name="Hammon N."/>
            <person name="Israni S."/>
            <person name="Dalin E."/>
            <person name="Tice H."/>
            <person name="Pitluck S."/>
            <person name="Chain P."/>
            <person name="Malfatti S."/>
            <person name="Shin M."/>
            <person name="Vergez L."/>
            <person name="Schmutz J."/>
            <person name="Larimer F."/>
            <person name="Land M."/>
            <person name="Hauser L."/>
            <person name="Kyrpides N."/>
            <person name="Mikhailova N."/>
            <person name="Stolz J.F."/>
            <person name="Dawson A."/>
            <person name="Fisher E."/>
            <person name="Crable B."/>
            <person name="Perera E."/>
            <person name="Lisak J."/>
            <person name="Ranganathan M."/>
            <person name="Basu P."/>
            <person name="Richardson P."/>
        </authorList>
    </citation>
    <scope>NUCLEOTIDE SEQUENCE [LARGE SCALE GENOMIC DNA]</scope>
    <source>
        <strain>OhILAs</strain>
    </source>
</reference>
<feature type="chain" id="PRO_0000349508" description="tRNA-specific 2-thiouridylase MnmA">
    <location>
        <begin position="1"/>
        <end position="364"/>
    </location>
</feature>
<feature type="region of interest" description="Interaction with target base in tRNA" evidence="1">
    <location>
        <begin position="99"/>
        <end position="101"/>
    </location>
</feature>
<feature type="region of interest" description="Interaction with tRNA" evidence="1">
    <location>
        <begin position="150"/>
        <end position="152"/>
    </location>
</feature>
<feature type="region of interest" description="Interaction with tRNA" evidence="1">
    <location>
        <begin position="310"/>
        <end position="311"/>
    </location>
</feature>
<feature type="active site" description="Nucleophile" evidence="1">
    <location>
        <position position="104"/>
    </location>
</feature>
<feature type="active site" description="Cysteine persulfide intermediate" evidence="1">
    <location>
        <position position="200"/>
    </location>
</feature>
<feature type="binding site" evidence="1">
    <location>
        <begin position="13"/>
        <end position="20"/>
    </location>
    <ligand>
        <name>ATP</name>
        <dbReference type="ChEBI" id="CHEBI:30616"/>
    </ligand>
</feature>
<feature type="binding site" evidence="1">
    <location>
        <position position="39"/>
    </location>
    <ligand>
        <name>ATP</name>
        <dbReference type="ChEBI" id="CHEBI:30616"/>
    </ligand>
</feature>
<feature type="binding site" evidence="1">
    <location>
        <position position="128"/>
    </location>
    <ligand>
        <name>ATP</name>
        <dbReference type="ChEBI" id="CHEBI:30616"/>
    </ligand>
</feature>
<feature type="site" description="Interaction with tRNA" evidence="1">
    <location>
        <position position="129"/>
    </location>
</feature>
<feature type="site" description="Interaction with tRNA" evidence="1">
    <location>
        <position position="343"/>
    </location>
</feature>
<feature type="disulfide bond" description="Alternate" evidence="1">
    <location>
        <begin position="104"/>
        <end position="200"/>
    </location>
</feature>
<protein>
    <recommendedName>
        <fullName evidence="1">tRNA-specific 2-thiouridylase MnmA</fullName>
        <ecNumber evidence="1">2.8.1.13</ecNumber>
    </recommendedName>
</protein>
<sequence>MSKAPKDTKVVIGMSGGVDSSVAALLLKQQGYDVVGIFMKNWDESDELGYCTSAEDYEDVRRVCDQIGIPYYSVNFEKEYWDRVFTYFLNEYKAGRTPNPDVMCNKEIKFKAFLDHAIKLGADYLATGHYAQVDYSDGEYRLLRGVDTNKDQTYFLNQLNQYQLSKAMFPVGHLQKKDLRQIALDAGLATASKKDSTGICFIGERNFKEFLSNYLPAKPGKIISLDGEVKGKHDGLMYYTLGQRKGLGIGGAGTGEPWFVVDKDLEKNILYVTQGETHPSLYSRGLIGADLQWVSENPKPSVIKCTAKFRYRQPDQGVTVYVEEGNTCRVMFDEPQKAITPGQAVVFYDGVVCLGGATIDQILK</sequence>
<keyword id="KW-0067">ATP-binding</keyword>
<keyword id="KW-0963">Cytoplasm</keyword>
<keyword id="KW-1015">Disulfide bond</keyword>
<keyword id="KW-0547">Nucleotide-binding</keyword>
<keyword id="KW-1185">Reference proteome</keyword>
<keyword id="KW-0694">RNA-binding</keyword>
<keyword id="KW-0808">Transferase</keyword>
<keyword id="KW-0819">tRNA processing</keyword>
<keyword id="KW-0820">tRNA-binding</keyword>
<accession>A8MEV9</accession>
<evidence type="ECO:0000255" key="1">
    <source>
        <dbReference type="HAMAP-Rule" id="MF_00144"/>
    </source>
</evidence>
<name>MNMA_ALKOO</name>